<gene>
    <name evidence="1" type="primary">ligA</name>
    <name type="synonym">lig</name>
    <name type="ordered locus">SAS1827</name>
</gene>
<organism>
    <name type="scientific">Staphylococcus aureus (strain MSSA476)</name>
    <dbReference type="NCBI Taxonomy" id="282459"/>
    <lineage>
        <taxon>Bacteria</taxon>
        <taxon>Bacillati</taxon>
        <taxon>Bacillota</taxon>
        <taxon>Bacilli</taxon>
        <taxon>Bacillales</taxon>
        <taxon>Staphylococcaceae</taxon>
        <taxon>Staphylococcus</taxon>
    </lineage>
</organism>
<sequence length="667" mass="75081">MADLSSRVNELHDLLNQYSYEYYVEDNPSVPDSEYDKLLHELIKIEEEHPEYKTVDSPTVRVGGEAQASFNKVNHDTPMLSLGNAFNEDDLRKFDQRIREQIGNVEYMCELKIDGLAVSLKYVDGYFVQGLTRGDGTTGEDITENLKTIHAIPLKMKEPLNVEVRGEAYMPRRSFLRLNEEKEKNDEQLFANPRNAAAGSLRQLDSKLTAKRKLSVFIYSVNDFTDFNARSQSEALDELDKLGFTTNKNRARVNNIDGVLEYIEKWTSQRESLPYDIDGIVIKVNDLDQQDEMGFTQKSPRWAIAYKFPAEEVVTKLLDIELSIGRTGVVTPTAILEPVKVAGTTVSRASLHNEDLIHDRDIRIGDSVVVKKAGDIIPEVVRSIPERRPEDAVTYHMPTHCPSCGHELVRIEGEVALRCINPKCQAQLVEGLIHFVSRQAMNIDGLGTKIIQQLYQSELIKDVADIFYLTEEDLLPLDRMGQKKVDNLLAAIQQAKDNSLENLLFGLGIRHLGVKASQVLAEKYETIDRLLTVTEAELVEIHDIGDKVAQSVVTYLENEDIRALIQKLKDKHVNMIYKGIKTSDIEGHPEFSGKTIVLTGKLHQMTRNEASKWLASQGAKVTSSVTKNTDVVIAGEDAGSKLTKAQSLGIEIWTEQQFVDKQNELNS</sequence>
<feature type="chain" id="PRO_0000161760" description="DNA ligase">
    <location>
        <begin position="1"/>
        <end position="667"/>
    </location>
</feature>
<feature type="domain" description="BRCT" evidence="1">
    <location>
        <begin position="586"/>
        <end position="667"/>
    </location>
</feature>
<feature type="active site" description="N6-AMP-lysine intermediate" evidence="1">
    <location>
        <position position="112"/>
    </location>
</feature>
<feature type="binding site" evidence="1">
    <location>
        <begin position="32"/>
        <end position="36"/>
    </location>
    <ligand>
        <name>NAD(+)</name>
        <dbReference type="ChEBI" id="CHEBI:57540"/>
    </ligand>
</feature>
<feature type="binding site" evidence="1">
    <location>
        <begin position="81"/>
        <end position="82"/>
    </location>
    <ligand>
        <name>NAD(+)</name>
        <dbReference type="ChEBI" id="CHEBI:57540"/>
    </ligand>
</feature>
<feature type="binding site" evidence="1">
    <location>
        <position position="110"/>
    </location>
    <ligand>
        <name>NAD(+)</name>
        <dbReference type="ChEBI" id="CHEBI:57540"/>
    </ligand>
</feature>
<feature type="binding site" evidence="1">
    <location>
        <position position="133"/>
    </location>
    <ligand>
        <name>NAD(+)</name>
        <dbReference type="ChEBI" id="CHEBI:57540"/>
    </ligand>
</feature>
<feature type="binding site" evidence="1">
    <location>
        <position position="167"/>
    </location>
    <ligand>
        <name>NAD(+)</name>
        <dbReference type="ChEBI" id="CHEBI:57540"/>
    </ligand>
</feature>
<feature type="binding site" evidence="1">
    <location>
        <position position="283"/>
    </location>
    <ligand>
        <name>NAD(+)</name>
        <dbReference type="ChEBI" id="CHEBI:57540"/>
    </ligand>
</feature>
<feature type="binding site" evidence="1">
    <location>
        <position position="307"/>
    </location>
    <ligand>
        <name>NAD(+)</name>
        <dbReference type="ChEBI" id="CHEBI:57540"/>
    </ligand>
</feature>
<feature type="binding site" evidence="1">
    <location>
        <position position="401"/>
    </location>
    <ligand>
        <name>Zn(2+)</name>
        <dbReference type="ChEBI" id="CHEBI:29105"/>
    </ligand>
</feature>
<feature type="binding site" evidence="1">
    <location>
        <position position="404"/>
    </location>
    <ligand>
        <name>Zn(2+)</name>
        <dbReference type="ChEBI" id="CHEBI:29105"/>
    </ligand>
</feature>
<feature type="binding site" evidence="1">
    <location>
        <position position="419"/>
    </location>
    <ligand>
        <name>Zn(2+)</name>
        <dbReference type="ChEBI" id="CHEBI:29105"/>
    </ligand>
</feature>
<feature type="binding site" evidence="1">
    <location>
        <position position="424"/>
    </location>
    <ligand>
        <name>Zn(2+)</name>
        <dbReference type="ChEBI" id="CHEBI:29105"/>
    </ligand>
</feature>
<accession>Q6G829</accession>
<evidence type="ECO:0000255" key="1">
    <source>
        <dbReference type="HAMAP-Rule" id="MF_01588"/>
    </source>
</evidence>
<name>DNLJ_STAAS</name>
<dbReference type="EC" id="6.5.1.2" evidence="1"/>
<dbReference type="EMBL" id="BX571857">
    <property type="protein sequence ID" value="CAG43632.1"/>
    <property type="molecule type" value="Genomic_DNA"/>
</dbReference>
<dbReference type="RefSeq" id="WP_000774565.1">
    <property type="nucleotide sequence ID" value="NC_002953.3"/>
</dbReference>
<dbReference type="SMR" id="Q6G829"/>
<dbReference type="KEGG" id="sas:SAS1827"/>
<dbReference type="HOGENOM" id="CLU_007764_2_1_9"/>
<dbReference type="GO" id="GO:0005829">
    <property type="term" value="C:cytosol"/>
    <property type="evidence" value="ECO:0007669"/>
    <property type="project" value="TreeGrafter"/>
</dbReference>
<dbReference type="GO" id="GO:0003677">
    <property type="term" value="F:DNA binding"/>
    <property type="evidence" value="ECO:0007669"/>
    <property type="project" value="InterPro"/>
</dbReference>
<dbReference type="GO" id="GO:0003911">
    <property type="term" value="F:DNA ligase (NAD+) activity"/>
    <property type="evidence" value="ECO:0007669"/>
    <property type="project" value="UniProtKB-UniRule"/>
</dbReference>
<dbReference type="GO" id="GO:0046872">
    <property type="term" value="F:metal ion binding"/>
    <property type="evidence" value="ECO:0007669"/>
    <property type="project" value="UniProtKB-KW"/>
</dbReference>
<dbReference type="GO" id="GO:0006281">
    <property type="term" value="P:DNA repair"/>
    <property type="evidence" value="ECO:0007669"/>
    <property type="project" value="UniProtKB-KW"/>
</dbReference>
<dbReference type="GO" id="GO:0006260">
    <property type="term" value="P:DNA replication"/>
    <property type="evidence" value="ECO:0007669"/>
    <property type="project" value="UniProtKB-KW"/>
</dbReference>
<dbReference type="CDD" id="cd17748">
    <property type="entry name" value="BRCT_DNA_ligase_like"/>
    <property type="match status" value="1"/>
</dbReference>
<dbReference type="CDD" id="cd00114">
    <property type="entry name" value="LIGANc"/>
    <property type="match status" value="1"/>
</dbReference>
<dbReference type="FunFam" id="1.10.150.20:FF:000006">
    <property type="entry name" value="DNA ligase"/>
    <property type="match status" value="1"/>
</dbReference>
<dbReference type="FunFam" id="1.10.150.20:FF:000007">
    <property type="entry name" value="DNA ligase"/>
    <property type="match status" value="1"/>
</dbReference>
<dbReference type="FunFam" id="1.10.287.610:FF:000005">
    <property type="entry name" value="DNA ligase"/>
    <property type="match status" value="1"/>
</dbReference>
<dbReference type="FunFam" id="2.40.50.140:FF:000012">
    <property type="entry name" value="DNA ligase"/>
    <property type="match status" value="1"/>
</dbReference>
<dbReference type="FunFam" id="3.30.470.30:FF:000001">
    <property type="entry name" value="DNA ligase"/>
    <property type="match status" value="1"/>
</dbReference>
<dbReference type="FunFam" id="3.40.50.10190:FF:000045">
    <property type="entry name" value="DNA ligase"/>
    <property type="match status" value="1"/>
</dbReference>
<dbReference type="FunFam" id="6.20.10.30:FF:000002">
    <property type="entry name" value="DNA ligase"/>
    <property type="match status" value="1"/>
</dbReference>
<dbReference type="Gene3D" id="6.20.10.30">
    <property type="match status" value="1"/>
</dbReference>
<dbReference type="Gene3D" id="1.10.150.20">
    <property type="entry name" value="5' to 3' exonuclease, C-terminal subdomain"/>
    <property type="match status" value="2"/>
</dbReference>
<dbReference type="Gene3D" id="3.40.50.10190">
    <property type="entry name" value="BRCT domain"/>
    <property type="match status" value="1"/>
</dbReference>
<dbReference type="Gene3D" id="3.30.470.30">
    <property type="entry name" value="DNA ligase/mRNA capping enzyme"/>
    <property type="match status" value="1"/>
</dbReference>
<dbReference type="Gene3D" id="1.10.287.610">
    <property type="entry name" value="Helix hairpin bin"/>
    <property type="match status" value="1"/>
</dbReference>
<dbReference type="Gene3D" id="2.40.50.140">
    <property type="entry name" value="Nucleic acid-binding proteins"/>
    <property type="match status" value="1"/>
</dbReference>
<dbReference type="HAMAP" id="MF_01588">
    <property type="entry name" value="DNA_ligase_A"/>
    <property type="match status" value="1"/>
</dbReference>
<dbReference type="InterPro" id="IPR001357">
    <property type="entry name" value="BRCT_dom"/>
</dbReference>
<dbReference type="InterPro" id="IPR036420">
    <property type="entry name" value="BRCT_dom_sf"/>
</dbReference>
<dbReference type="InterPro" id="IPR041663">
    <property type="entry name" value="DisA/LigA_HHH"/>
</dbReference>
<dbReference type="InterPro" id="IPR001679">
    <property type="entry name" value="DNA_ligase"/>
</dbReference>
<dbReference type="InterPro" id="IPR018239">
    <property type="entry name" value="DNA_ligase_AS"/>
</dbReference>
<dbReference type="InterPro" id="IPR033136">
    <property type="entry name" value="DNA_ligase_CS"/>
</dbReference>
<dbReference type="InterPro" id="IPR013839">
    <property type="entry name" value="DNAligase_adenylation"/>
</dbReference>
<dbReference type="InterPro" id="IPR013840">
    <property type="entry name" value="DNAligase_N"/>
</dbReference>
<dbReference type="InterPro" id="IPR003583">
    <property type="entry name" value="Hlx-hairpin-Hlx_DNA-bd_motif"/>
</dbReference>
<dbReference type="InterPro" id="IPR012340">
    <property type="entry name" value="NA-bd_OB-fold"/>
</dbReference>
<dbReference type="InterPro" id="IPR004150">
    <property type="entry name" value="NAD_DNA_ligase_OB"/>
</dbReference>
<dbReference type="InterPro" id="IPR010994">
    <property type="entry name" value="RuvA_2-like"/>
</dbReference>
<dbReference type="InterPro" id="IPR004149">
    <property type="entry name" value="Znf_DNAligase_C4"/>
</dbReference>
<dbReference type="NCBIfam" id="TIGR00575">
    <property type="entry name" value="dnlj"/>
    <property type="match status" value="1"/>
</dbReference>
<dbReference type="NCBIfam" id="NF005932">
    <property type="entry name" value="PRK07956.1"/>
    <property type="match status" value="1"/>
</dbReference>
<dbReference type="PANTHER" id="PTHR23389">
    <property type="entry name" value="CHROMOSOME TRANSMISSION FIDELITY FACTOR 18"/>
    <property type="match status" value="1"/>
</dbReference>
<dbReference type="PANTHER" id="PTHR23389:SF9">
    <property type="entry name" value="DNA LIGASE"/>
    <property type="match status" value="1"/>
</dbReference>
<dbReference type="Pfam" id="PF00533">
    <property type="entry name" value="BRCT"/>
    <property type="match status" value="1"/>
</dbReference>
<dbReference type="Pfam" id="PF01653">
    <property type="entry name" value="DNA_ligase_aden"/>
    <property type="match status" value="1"/>
</dbReference>
<dbReference type="Pfam" id="PF03120">
    <property type="entry name" value="DNA_ligase_OB"/>
    <property type="match status" value="1"/>
</dbReference>
<dbReference type="Pfam" id="PF03119">
    <property type="entry name" value="DNA_ligase_ZBD"/>
    <property type="match status" value="1"/>
</dbReference>
<dbReference type="Pfam" id="PF12826">
    <property type="entry name" value="HHH_2"/>
    <property type="match status" value="1"/>
</dbReference>
<dbReference type="PIRSF" id="PIRSF001604">
    <property type="entry name" value="LigA"/>
    <property type="match status" value="1"/>
</dbReference>
<dbReference type="SMART" id="SM00292">
    <property type="entry name" value="BRCT"/>
    <property type="match status" value="1"/>
</dbReference>
<dbReference type="SMART" id="SM00278">
    <property type="entry name" value="HhH1"/>
    <property type="match status" value="3"/>
</dbReference>
<dbReference type="SMART" id="SM00532">
    <property type="entry name" value="LIGANc"/>
    <property type="match status" value="1"/>
</dbReference>
<dbReference type="SUPFAM" id="SSF52113">
    <property type="entry name" value="BRCT domain"/>
    <property type="match status" value="1"/>
</dbReference>
<dbReference type="SUPFAM" id="SSF56091">
    <property type="entry name" value="DNA ligase/mRNA capping enzyme, catalytic domain"/>
    <property type="match status" value="1"/>
</dbReference>
<dbReference type="SUPFAM" id="SSF50249">
    <property type="entry name" value="Nucleic acid-binding proteins"/>
    <property type="match status" value="1"/>
</dbReference>
<dbReference type="SUPFAM" id="SSF47781">
    <property type="entry name" value="RuvA domain 2-like"/>
    <property type="match status" value="1"/>
</dbReference>
<dbReference type="PROSITE" id="PS50172">
    <property type="entry name" value="BRCT"/>
    <property type="match status" value="1"/>
</dbReference>
<dbReference type="PROSITE" id="PS01055">
    <property type="entry name" value="DNA_LIGASE_N1"/>
    <property type="match status" value="1"/>
</dbReference>
<dbReference type="PROSITE" id="PS01056">
    <property type="entry name" value="DNA_LIGASE_N2"/>
    <property type="match status" value="1"/>
</dbReference>
<comment type="function">
    <text evidence="1">DNA ligase that catalyzes the formation of phosphodiester linkages between 5'-phosphoryl and 3'-hydroxyl groups in double-stranded DNA using NAD as a coenzyme and as the energy source for the reaction. It is essential for DNA replication and repair of damaged DNA.</text>
</comment>
<comment type="catalytic activity">
    <reaction evidence="1">
        <text>NAD(+) + (deoxyribonucleotide)n-3'-hydroxyl + 5'-phospho-(deoxyribonucleotide)m = (deoxyribonucleotide)n+m + AMP + beta-nicotinamide D-nucleotide.</text>
        <dbReference type="EC" id="6.5.1.2"/>
    </reaction>
</comment>
<comment type="cofactor">
    <cofactor evidence="1">
        <name>Mg(2+)</name>
        <dbReference type="ChEBI" id="CHEBI:18420"/>
    </cofactor>
    <cofactor evidence="1">
        <name>Mn(2+)</name>
        <dbReference type="ChEBI" id="CHEBI:29035"/>
    </cofactor>
</comment>
<comment type="similarity">
    <text evidence="1">Belongs to the NAD-dependent DNA ligase family. LigA subfamily.</text>
</comment>
<protein>
    <recommendedName>
        <fullName evidence="1">DNA ligase</fullName>
        <ecNumber evidence="1">6.5.1.2</ecNumber>
    </recommendedName>
    <alternativeName>
        <fullName evidence="1">Polydeoxyribonucleotide synthase [NAD(+)]</fullName>
    </alternativeName>
</protein>
<reference key="1">
    <citation type="journal article" date="2004" name="Proc. Natl. Acad. Sci. U.S.A.">
        <title>Complete genomes of two clinical Staphylococcus aureus strains: evidence for the rapid evolution of virulence and drug resistance.</title>
        <authorList>
            <person name="Holden M.T.G."/>
            <person name="Feil E.J."/>
            <person name="Lindsay J.A."/>
            <person name="Peacock S.J."/>
            <person name="Day N.P.J."/>
            <person name="Enright M.C."/>
            <person name="Foster T.J."/>
            <person name="Moore C.E."/>
            <person name="Hurst L."/>
            <person name="Atkin R."/>
            <person name="Barron A."/>
            <person name="Bason N."/>
            <person name="Bentley S.D."/>
            <person name="Chillingworth C."/>
            <person name="Chillingworth T."/>
            <person name="Churcher C."/>
            <person name="Clark L."/>
            <person name="Corton C."/>
            <person name="Cronin A."/>
            <person name="Doggett J."/>
            <person name="Dowd L."/>
            <person name="Feltwell T."/>
            <person name="Hance Z."/>
            <person name="Harris B."/>
            <person name="Hauser H."/>
            <person name="Holroyd S."/>
            <person name="Jagels K."/>
            <person name="James K.D."/>
            <person name="Lennard N."/>
            <person name="Line A."/>
            <person name="Mayes R."/>
            <person name="Moule S."/>
            <person name="Mungall K."/>
            <person name="Ormond D."/>
            <person name="Quail M.A."/>
            <person name="Rabbinowitsch E."/>
            <person name="Rutherford K.M."/>
            <person name="Sanders M."/>
            <person name="Sharp S."/>
            <person name="Simmonds M."/>
            <person name="Stevens K."/>
            <person name="Whitehead S."/>
            <person name="Barrell B.G."/>
            <person name="Spratt B.G."/>
            <person name="Parkhill J."/>
        </authorList>
    </citation>
    <scope>NUCLEOTIDE SEQUENCE [LARGE SCALE GENOMIC DNA]</scope>
    <source>
        <strain>MSSA476</strain>
    </source>
</reference>
<proteinExistence type="inferred from homology"/>
<keyword id="KW-0227">DNA damage</keyword>
<keyword id="KW-0234">DNA repair</keyword>
<keyword id="KW-0235">DNA replication</keyword>
<keyword id="KW-0436">Ligase</keyword>
<keyword id="KW-0460">Magnesium</keyword>
<keyword id="KW-0464">Manganese</keyword>
<keyword id="KW-0479">Metal-binding</keyword>
<keyword id="KW-0520">NAD</keyword>
<keyword id="KW-0862">Zinc</keyword>